<feature type="signal peptide" evidence="2">
    <location>
        <begin position="1"/>
        <end position="27"/>
    </location>
</feature>
<feature type="chain" id="PRO_0000421381" description="Apolipoprotein C-IV">
    <location>
        <begin position="28"/>
        <end position="127"/>
    </location>
</feature>
<proteinExistence type="inferred from homology"/>
<protein>
    <recommendedName>
        <fullName>Apolipoprotein C-IV</fullName>
        <shortName>Apo-CIV</shortName>
        <shortName>ApoC-IV</shortName>
    </recommendedName>
    <alternativeName>
        <fullName>Apolipoprotein C4</fullName>
    </alternativeName>
</protein>
<name>APOC4_PAPHA</name>
<gene>
    <name type="primary">APOC4</name>
</gene>
<sequence>MSLLRNRLQDLPALCLCVLVLACIGACQSEAYEGTPSPPPKLKMSHWSLVMGRMKELLEPVLNRTRDRWQWFWSPSTFRGFMQTYYDDHLRDLGPRTKAWLLKSKESLLNKTHSLCPRIVCGDKDQG</sequence>
<keyword id="KW-0445">Lipid transport</keyword>
<keyword id="KW-0964">Secreted</keyword>
<keyword id="KW-0732">Signal</keyword>
<keyword id="KW-0813">Transport</keyword>
<organism>
    <name type="scientific">Papio hamadryas</name>
    <name type="common">Hamadryas baboon</name>
    <dbReference type="NCBI Taxonomy" id="9557"/>
    <lineage>
        <taxon>Eukaryota</taxon>
        <taxon>Metazoa</taxon>
        <taxon>Chordata</taxon>
        <taxon>Craniata</taxon>
        <taxon>Vertebrata</taxon>
        <taxon>Euteleostomi</taxon>
        <taxon>Mammalia</taxon>
        <taxon>Eutheria</taxon>
        <taxon>Euarchontoglires</taxon>
        <taxon>Primates</taxon>
        <taxon>Haplorrhini</taxon>
        <taxon>Catarrhini</taxon>
        <taxon>Cercopithecidae</taxon>
        <taxon>Cercopithecinae</taxon>
        <taxon>Papio</taxon>
    </lineage>
</organism>
<comment type="function">
    <text evidence="1">May participate in lipoprotein metabolism.</text>
</comment>
<comment type="subcellular location">
    <subcellularLocation>
        <location evidence="1">Secreted</location>
    </subcellularLocation>
</comment>
<comment type="similarity">
    <text evidence="3">Belongs to the apolipoprotein C4 family.</text>
</comment>
<evidence type="ECO:0000250" key="1"/>
<evidence type="ECO:0000250" key="2">
    <source>
        <dbReference type="UniProtKB" id="P55057"/>
    </source>
</evidence>
<evidence type="ECO:0000305" key="3"/>
<reference key="1">
    <citation type="submission" date="2003-07" db="EMBL/GenBank/DDBJ databases">
        <authorList>
            <person name="Cheng J.-F."/>
            <person name="Hamilton M."/>
            <person name="Peng Y."/>
            <person name="Hosseini R."/>
            <person name="Peng Z."/>
            <person name="Malinov I."/>
            <person name="Rubin E.M."/>
        </authorList>
    </citation>
    <scope>NUCLEOTIDE SEQUENCE [LARGE SCALE GENOMIC DNA]</scope>
</reference>
<reference key="2">
    <citation type="unpublished observations" date="2012-12">
        <authorList>
            <person name="Puppione D.L."/>
        </authorList>
    </citation>
    <scope>IDENTIFICATION</scope>
</reference>
<accession>P0DKY3</accession>
<dbReference type="EMBL" id="AC145523">
    <property type="status" value="NOT_ANNOTATED_CDS"/>
    <property type="molecule type" value="Genomic_DNA"/>
</dbReference>
<dbReference type="GO" id="GO:0034364">
    <property type="term" value="C:high-density lipoprotein particle"/>
    <property type="evidence" value="ECO:0007669"/>
    <property type="project" value="TreeGrafter"/>
</dbReference>
<dbReference type="GO" id="GO:0034361">
    <property type="term" value="C:very-low-density lipoprotein particle"/>
    <property type="evidence" value="ECO:0007669"/>
    <property type="project" value="TreeGrafter"/>
</dbReference>
<dbReference type="GO" id="GO:0006869">
    <property type="term" value="P:lipid transport"/>
    <property type="evidence" value="ECO:0007669"/>
    <property type="project" value="UniProtKB-KW"/>
</dbReference>
<dbReference type="GO" id="GO:0010890">
    <property type="term" value="P:positive regulation of triglyceride storage"/>
    <property type="evidence" value="ECO:0007669"/>
    <property type="project" value="TreeGrafter"/>
</dbReference>
<dbReference type="GO" id="GO:0070328">
    <property type="term" value="P:triglyceride homeostasis"/>
    <property type="evidence" value="ECO:0007669"/>
    <property type="project" value="TreeGrafter"/>
</dbReference>
<dbReference type="InterPro" id="IPR028120">
    <property type="entry name" value="APOC4"/>
</dbReference>
<dbReference type="PANTHER" id="PTHR32288">
    <property type="entry name" value="APOLIPOPROTEIN C-IV"/>
    <property type="match status" value="1"/>
</dbReference>
<dbReference type="PANTHER" id="PTHR32288:SF0">
    <property type="entry name" value="APOLIPOPROTEIN C-IV"/>
    <property type="match status" value="1"/>
</dbReference>
<dbReference type="Pfam" id="PF15119">
    <property type="entry name" value="APOC4"/>
    <property type="match status" value="1"/>
</dbReference>